<accession>Q185S5</accession>
<evidence type="ECO:0000255" key="1">
    <source>
        <dbReference type="HAMAP-Rule" id="MF_00040"/>
    </source>
</evidence>
<proteinExistence type="inferred from homology"/>
<gene>
    <name evidence="1" type="primary">frr</name>
    <name type="ordered locus">CD630_21370</name>
</gene>
<name>RRF_CLOD6</name>
<reference key="1">
    <citation type="journal article" date="2006" name="Nat. Genet.">
        <title>The multidrug-resistant human pathogen Clostridium difficile has a highly mobile, mosaic genome.</title>
        <authorList>
            <person name="Sebaihia M."/>
            <person name="Wren B.W."/>
            <person name="Mullany P."/>
            <person name="Fairweather N.F."/>
            <person name="Minton N."/>
            <person name="Stabler R."/>
            <person name="Thomson N.R."/>
            <person name="Roberts A.P."/>
            <person name="Cerdeno-Tarraga A.M."/>
            <person name="Wang H."/>
            <person name="Holden M.T.G."/>
            <person name="Wright A."/>
            <person name="Churcher C."/>
            <person name="Quail M.A."/>
            <person name="Baker S."/>
            <person name="Bason N."/>
            <person name="Brooks K."/>
            <person name="Chillingworth T."/>
            <person name="Cronin A."/>
            <person name="Davis P."/>
            <person name="Dowd L."/>
            <person name="Fraser A."/>
            <person name="Feltwell T."/>
            <person name="Hance Z."/>
            <person name="Holroyd S."/>
            <person name="Jagels K."/>
            <person name="Moule S."/>
            <person name="Mungall K."/>
            <person name="Price C."/>
            <person name="Rabbinowitsch E."/>
            <person name="Sharp S."/>
            <person name="Simmonds M."/>
            <person name="Stevens K."/>
            <person name="Unwin L."/>
            <person name="Whithead S."/>
            <person name="Dupuy B."/>
            <person name="Dougan G."/>
            <person name="Barrell B."/>
            <person name="Parkhill J."/>
        </authorList>
    </citation>
    <scope>NUCLEOTIDE SEQUENCE [LARGE SCALE GENOMIC DNA]</scope>
    <source>
        <strain>630</strain>
    </source>
</reference>
<keyword id="KW-0963">Cytoplasm</keyword>
<keyword id="KW-0648">Protein biosynthesis</keyword>
<keyword id="KW-1185">Reference proteome</keyword>
<dbReference type="EMBL" id="AM180355">
    <property type="protein sequence ID" value="CAJ69022.1"/>
    <property type="molecule type" value="Genomic_DNA"/>
</dbReference>
<dbReference type="RefSeq" id="WP_003430598.1">
    <property type="nucleotide sequence ID" value="NZ_JAUPES010000047.1"/>
</dbReference>
<dbReference type="RefSeq" id="YP_001088651.1">
    <property type="nucleotide sequence ID" value="NC_009089.1"/>
</dbReference>
<dbReference type="SMR" id="Q185S5"/>
<dbReference type="STRING" id="272563.CD630_21370"/>
<dbReference type="EnsemblBacteria" id="CAJ69022">
    <property type="protein sequence ID" value="CAJ69022"/>
    <property type="gene ID" value="CD630_21370"/>
</dbReference>
<dbReference type="KEGG" id="cdf:CD630_21370"/>
<dbReference type="KEGG" id="pdc:CDIF630_02368"/>
<dbReference type="PATRIC" id="fig|272563.120.peg.2257"/>
<dbReference type="eggNOG" id="COG0233">
    <property type="taxonomic scope" value="Bacteria"/>
</dbReference>
<dbReference type="OrthoDB" id="9804006at2"/>
<dbReference type="PhylomeDB" id="Q185S5"/>
<dbReference type="BioCyc" id="PDIF272563:G12WB-2294-MONOMER"/>
<dbReference type="Proteomes" id="UP000001978">
    <property type="component" value="Chromosome"/>
</dbReference>
<dbReference type="GO" id="GO:0005737">
    <property type="term" value="C:cytoplasm"/>
    <property type="evidence" value="ECO:0007669"/>
    <property type="project" value="UniProtKB-SubCell"/>
</dbReference>
<dbReference type="GO" id="GO:0043023">
    <property type="term" value="F:ribosomal large subunit binding"/>
    <property type="evidence" value="ECO:0007669"/>
    <property type="project" value="TreeGrafter"/>
</dbReference>
<dbReference type="GO" id="GO:0006415">
    <property type="term" value="P:translational termination"/>
    <property type="evidence" value="ECO:0007669"/>
    <property type="project" value="UniProtKB-UniRule"/>
</dbReference>
<dbReference type="CDD" id="cd00520">
    <property type="entry name" value="RRF"/>
    <property type="match status" value="1"/>
</dbReference>
<dbReference type="FunFam" id="1.10.132.20:FF:000001">
    <property type="entry name" value="Ribosome-recycling factor"/>
    <property type="match status" value="1"/>
</dbReference>
<dbReference type="FunFam" id="3.30.1360.40:FF:000001">
    <property type="entry name" value="Ribosome-recycling factor"/>
    <property type="match status" value="1"/>
</dbReference>
<dbReference type="Gene3D" id="3.30.1360.40">
    <property type="match status" value="1"/>
</dbReference>
<dbReference type="Gene3D" id="1.10.132.20">
    <property type="entry name" value="Ribosome-recycling factor"/>
    <property type="match status" value="1"/>
</dbReference>
<dbReference type="HAMAP" id="MF_00040">
    <property type="entry name" value="RRF"/>
    <property type="match status" value="1"/>
</dbReference>
<dbReference type="InterPro" id="IPR002661">
    <property type="entry name" value="Ribosome_recyc_fac"/>
</dbReference>
<dbReference type="InterPro" id="IPR023584">
    <property type="entry name" value="Ribosome_recyc_fac_dom"/>
</dbReference>
<dbReference type="InterPro" id="IPR036191">
    <property type="entry name" value="RRF_sf"/>
</dbReference>
<dbReference type="NCBIfam" id="TIGR00496">
    <property type="entry name" value="frr"/>
    <property type="match status" value="1"/>
</dbReference>
<dbReference type="PANTHER" id="PTHR20982:SF3">
    <property type="entry name" value="MITOCHONDRIAL RIBOSOME RECYCLING FACTOR PSEUDO 1"/>
    <property type="match status" value="1"/>
</dbReference>
<dbReference type="PANTHER" id="PTHR20982">
    <property type="entry name" value="RIBOSOME RECYCLING FACTOR"/>
    <property type="match status" value="1"/>
</dbReference>
<dbReference type="Pfam" id="PF01765">
    <property type="entry name" value="RRF"/>
    <property type="match status" value="1"/>
</dbReference>
<dbReference type="SUPFAM" id="SSF55194">
    <property type="entry name" value="Ribosome recycling factor, RRF"/>
    <property type="match status" value="1"/>
</dbReference>
<sequence length="185" mass="21108">MKLEIHKQLEEKMNGTIDALKFEFGTIRAGRANAQMLDKIRVDYYGTPTPINQIGAISVPEPRILMISPWDKSAMHEIEKAIANSDLGLNPSNDGEVIRLSVPALTEERRKELAKKASKAAEEFKVRIRNERRDANEKIKKMEKGGELTEDELKKAQDEVQKMTDKFIKEIDTLLSKKEKDIMEV</sequence>
<organism>
    <name type="scientific">Clostridioides difficile (strain 630)</name>
    <name type="common">Peptoclostridium difficile</name>
    <dbReference type="NCBI Taxonomy" id="272563"/>
    <lineage>
        <taxon>Bacteria</taxon>
        <taxon>Bacillati</taxon>
        <taxon>Bacillota</taxon>
        <taxon>Clostridia</taxon>
        <taxon>Peptostreptococcales</taxon>
        <taxon>Peptostreptococcaceae</taxon>
        <taxon>Clostridioides</taxon>
    </lineage>
</organism>
<comment type="function">
    <text evidence="1">Responsible for the release of ribosomes from messenger RNA at the termination of protein biosynthesis. May increase the efficiency of translation by recycling ribosomes from one round of translation to another.</text>
</comment>
<comment type="subcellular location">
    <subcellularLocation>
        <location evidence="1">Cytoplasm</location>
    </subcellularLocation>
</comment>
<comment type="similarity">
    <text evidence="1">Belongs to the RRF family.</text>
</comment>
<protein>
    <recommendedName>
        <fullName evidence="1">Ribosome-recycling factor</fullName>
        <shortName evidence="1">RRF</shortName>
    </recommendedName>
    <alternativeName>
        <fullName evidence="1">Ribosome-releasing factor</fullName>
    </alternativeName>
</protein>
<feature type="chain" id="PRO_1000003143" description="Ribosome-recycling factor">
    <location>
        <begin position="1"/>
        <end position="185"/>
    </location>
</feature>